<reference evidence="4" key="1">
    <citation type="journal article" date="2003" name="Genome Res.">
        <title>An evolutionary analysis of orphan genes in Drosophila.</title>
        <authorList>
            <person name="Domazet-Loso T."/>
            <person name="Tautz D."/>
        </authorList>
    </citation>
    <scope>NUCLEOTIDE SEQUENCE [MRNA]</scope>
</reference>
<gene>
    <name type="primary">mtrm</name>
</gene>
<dbReference type="EMBL" id="AF531976">
    <property type="protein sequence ID" value="AAQ09875.1"/>
    <property type="molecule type" value="mRNA"/>
</dbReference>
<dbReference type="SMR" id="P83733"/>
<dbReference type="OrthoDB" id="539213at2759"/>
<dbReference type="GO" id="GO:0005694">
    <property type="term" value="C:chromosome"/>
    <property type="evidence" value="ECO:0007669"/>
    <property type="project" value="UniProtKB-SubCell"/>
</dbReference>
<dbReference type="GO" id="GO:0005634">
    <property type="term" value="C:nucleus"/>
    <property type="evidence" value="ECO:0000250"/>
    <property type="project" value="UniProtKB"/>
</dbReference>
<dbReference type="GO" id="GO:0003677">
    <property type="term" value="F:DNA binding"/>
    <property type="evidence" value="ECO:0007669"/>
    <property type="project" value="UniProtKB-KW"/>
</dbReference>
<dbReference type="GO" id="GO:0032837">
    <property type="term" value="P:distributive segregation"/>
    <property type="evidence" value="ECO:0007669"/>
    <property type="project" value="EnsemblMetazoa"/>
</dbReference>
<dbReference type="GO" id="GO:0016321">
    <property type="term" value="P:female meiosis chromosome segregation"/>
    <property type="evidence" value="ECO:0007669"/>
    <property type="project" value="EnsemblMetazoa"/>
</dbReference>
<dbReference type="GO" id="GO:0045143">
    <property type="term" value="P:homologous chromosome segregation"/>
    <property type="evidence" value="ECO:0000250"/>
    <property type="project" value="UniProtKB"/>
</dbReference>
<dbReference type="GO" id="GO:0051445">
    <property type="term" value="P:regulation of meiotic cell cycle"/>
    <property type="evidence" value="ECO:0007669"/>
    <property type="project" value="EnsemblMetazoa"/>
</dbReference>
<dbReference type="Gene3D" id="1.10.150.50">
    <property type="entry name" value="Transcription Factor, Ets-1"/>
    <property type="match status" value="1"/>
</dbReference>
<dbReference type="InterPro" id="IPR001660">
    <property type="entry name" value="SAM"/>
</dbReference>
<dbReference type="InterPro" id="IPR013761">
    <property type="entry name" value="SAM/pointed_sf"/>
</dbReference>
<dbReference type="Pfam" id="PF07647">
    <property type="entry name" value="SAM_2"/>
    <property type="match status" value="1"/>
</dbReference>
<dbReference type="SMART" id="SM00454">
    <property type="entry name" value="SAM"/>
    <property type="match status" value="1"/>
</dbReference>
<dbReference type="SUPFAM" id="SSF47769">
    <property type="entry name" value="SAM/Pointed domain"/>
    <property type="match status" value="1"/>
</dbReference>
<dbReference type="PROSITE" id="PS50105">
    <property type="entry name" value="SAM_DOMAIN"/>
    <property type="match status" value="1"/>
</dbReference>
<sequence length="219" mass="25205">MENCRTPTNKTQITLNRTPTLKERRWNTLKVNTTNVRCSTPIFGNFRSPNLSPIESMGTKKSPVSPMRFAFKKPPAKAHPHPHQHQHHHHHHKHIHRTQLKPPPFILPKPQEEIIEPEREIKICSSPDTFSDDSNMETSLVVESRRRSIKASNHSYVVNHAANVEQILMHMGLENYVTNFEEAHIDLVKLASMERADLVKIGLNADEDCNRIMDVLQTL</sequence>
<keyword id="KW-0131">Cell cycle</keyword>
<keyword id="KW-0158">Chromosome</keyword>
<keyword id="KW-0238">DNA-binding</keyword>
<keyword id="KW-0469">Meiosis</keyword>
<keyword id="KW-0539">Nucleus</keyword>
<keyword id="KW-0832">Ubl conjugation</keyword>
<comment type="function">
    <text evidence="1">Polo kinase inhibitor required to maintain G2 arrest in the meiotic cell cycle in females. Holds heterochromatically paired homologs together from the end of pachytene until metaphase I. Haploinsufficient locus for homologous achiasmate segregation and may be required for the maintenance of heterochromatic pairings.</text>
</comment>
<comment type="subunit">
    <text evidence="1">Interacts with polo. Interacts with cort.</text>
</comment>
<comment type="subcellular location">
    <subcellularLocation>
        <location evidence="1">Nucleus</location>
    </subcellularLocation>
    <subcellularLocation>
        <location evidence="1">Chromosome</location>
    </subcellularLocation>
</comment>
<comment type="PTM">
    <text evidence="1">Probably ubiquitinated: degraded during the oocyte-to-embryo transition by the anaphase promoting complex/cyclosome (APC/C) containing cort protein.</text>
</comment>
<accession>P83733</accession>
<protein>
    <recommendedName>
        <fullName>Protein matrimony</fullName>
    </recommendedName>
    <alternativeName>
        <fullName>Cell cycle arrest protein D52</fullName>
    </alternativeName>
</protein>
<name>MTRM_DROYA</name>
<feature type="chain" id="PRO_0000096636" description="Protein matrimony">
    <location>
        <begin position="1"/>
        <end position="219"/>
    </location>
</feature>
<feature type="domain" description="SAM" evidence="2">
    <location>
        <begin position="159"/>
        <end position="219"/>
    </location>
</feature>
<feature type="region of interest" description="Disordered" evidence="3">
    <location>
        <begin position="74"/>
        <end position="104"/>
    </location>
</feature>
<feature type="compositionally biased region" description="Basic residues" evidence="3">
    <location>
        <begin position="74"/>
        <end position="99"/>
    </location>
</feature>
<organism>
    <name type="scientific">Drosophila yakuba</name>
    <name type="common">Fruit fly</name>
    <dbReference type="NCBI Taxonomy" id="7245"/>
    <lineage>
        <taxon>Eukaryota</taxon>
        <taxon>Metazoa</taxon>
        <taxon>Ecdysozoa</taxon>
        <taxon>Arthropoda</taxon>
        <taxon>Hexapoda</taxon>
        <taxon>Insecta</taxon>
        <taxon>Pterygota</taxon>
        <taxon>Neoptera</taxon>
        <taxon>Endopterygota</taxon>
        <taxon>Diptera</taxon>
        <taxon>Brachycera</taxon>
        <taxon>Muscomorpha</taxon>
        <taxon>Ephydroidea</taxon>
        <taxon>Drosophilidae</taxon>
        <taxon>Drosophila</taxon>
        <taxon>Sophophora</taxon>
    </lineage>
</organism>
<proteinExistence type="evidence at transcript level"/>
<evidence type="ECO:0000250" key="1">
    <source>
        <dbReference type="UniProtKB" id="Q23973"/>
    </source>
</evidence>
<evidence type="ECO:0000255" key="2">
    <source>
        <dbReference type="PROSITE-ProRule" id="PRU00184"/>
    </source>
</evidence>
<evidence type="ECO:0000256" key="3">
    <source>
        <dbReference type="SAM" id="MobiDB-lite"/>
    </source>
</evidence>
<evidence type="ECO:0000312" key="4">
    <source>
        <dbReference type="EMBL" id="AAQ09875.1"/>
    </source>
</evidence>